<gene>
    <name evidence="1" type="primary">gpsA</name>
    <name type="ordered locus">Saro_2784</name>
</gene>
<dbReference type="EC" id="1.1.1.94" evidence="1"/>
<dbReference type="EMBL" id="CP000248">
    <property type="protein sequence ID" value="ABD27220.1"/>
    <property type="molecule type" value="Genomic_DNA"/>
</dbReference>
<dbReference type="RefSeq" id="WP_011446424.1">
    <property type="nucleotide sequence ID" value="NC_007794.1"/>
</dbReference>
<dbReference type="SMR" id="Q2G4K3"/>
<dbReference type="STRING" id="279238.Saro_2784"/>
<dbReference type="KEGG" id="nar:Saro_2784"/>
<dbReference type="eggNOG" id="COG0240">
    <property type="taxonomic scope" value="Bacteria"/>
</dbReference>
<dbReference type="HOGENOM" id="CLU_033449_0_2_5"/>
<dbReference type="UniPathway" id="UPA00940"/>
<dbReference type="Proteomes" id="UP000009134">
    <property type="component" value="Chromosome"/>
</dbReference>
<dbReference type="GO" id="GO:0005829">
    <property type="term" value="C:cytosol"/>
    <property type="evidence" value="ECO:0007669"/>
    <property type="project" value="TreeGrafter"/>
</dbReference>
<dbReference type="GO" id="GO:0047952">
    <property type="term" value="F:glycerol-3-phosphate dehydrogenase [NAD(P)+] activity"/>
    <property type="evidence" value="ECO:0007669"/>
    <property type="project" value="UniProtKB-UniRule"/>
</dbReference>
<dbReference type="GO" id="GO:0051287">
    <property type="term" value="F:NAD binding"/>
    <property type="evidence" value="ECO:0007669"/>
    <property type="project" value="InterPro"/>
</dbReference>
<dbReference type="GO" id="GO:0005975">
    <property type="term" value="P:carbohydrate metabolic process"/>
    <property type="evidence" value="ECO:0007669"/>
    <property type="project" value="InterPro"/>
</dbReference>
<dbReference type="GO" id="GO:0046167">
    <property type="term" value="P:glycerol-3-phosphate biosynthetic process"/>
    <property type="evidence" value="ECO:0007669"/>
    <property type="project" value="UniProtKB-UniRule"/>
</dbReference>
<dbReference type="GO" id="GO:0046168">
    <property type="term" value="P:glycerol-3-phosphate catabolic process"/>
    <property type="evidence" value="ECO:0007669"/>
    <property type="project" value="InterPro"/>
</dbReference>
<dbReference type="GO" id="GO:0006650">
    <property type="term" value="P:glycerophospholipid metabolic process"/>
    <property type="evidence" value="ECO:0007669"/>
    <property type="project" value="UniProtKB-UniRule"/>
</dbReference>
<dbReference type="GO" id="GO:0008654">
    <property type="term" value="P:phospholipid biosynthetic process"/>
    <property type="evidence" value="ECO:0007669"/>
    <property type="project" value="UniProtKB-KW"/>
</dbReference>
<dbReference type="FunFam" id="1.10.1040.10:FF:000001">
    <property type="entry name" value="Glycerol-3-phosphate dehydrogenase [NAD(P)+]"/>
    <property type="match status" value="1"/>
</dbReference>
<dbReference type="FunFam" id="3.40.50.720:FF:000019">
    <property type="entry name" value="Glycerol-3-phosphate dehydrogenase [NAD(P)+]"/>
    <property type="match status" value="1"/>
</dbReference>
<dbReference type="Gene3D" id="1.10.1040.10">
    <property type="entry name" value="N-(1-d-carboxylethyl)-l-norvaline Dehydrogenase, domain 2"/>
    <property type="match status" value="1"/>
</dbReference>
<dbReference type="Gene3D" id="3.40.50.720">
    <property type="entry name" value="NAD(P)-binding Rossmann-like Domain"/>
    <property type="match status" value="1"/>
</dbReference>
<dbReference type="HAMAP" id="MF_00394">
    <property type="entry name" value="NAD_Glyc3P_dehydrog"/>
    <property type="match status" value="1"/>
</dbReference>
<dbReference type="InterPro" id="IPR008927">
    <property type="entry name" value="6-PGluconate_DH-like_C_sf"/>
</dbReference>
<dbReference type="InterPro" id="IPR013328">
    <property type="entry name" value="6PGD_dom2"/>
</dbReference>
<dbReference type="InterPro" id="IPR006168">
    <property type="entry name" value="G3P_DH_NAD-dep"/>
</dbReference>
<dbReference type="InterPro" id="IPR006109">
    <property type="entry name" value="G3P_DH_NAD-dep_C"/>
</dbReference>
<dbReference type="InterPro" id="IPR011128">
    <property type="entry name" value="G3P_DH_NAD-dep_N"/>
</dbReference>
<dbReference type="InterPro" id="IPR036291">
    <property type="entry name" value="NAD(P)-bd_dom_sf"/>
</dbReference>
<dbReference type="NCBIfam" id="NF000940">
    <property type="entry name" value="PRK00094.1-2"/>
    <property type="match status" value="1"/>
</dbReference>
<dbReference type="NCBIfam" id="NF000942">
    <property type="entry name" value="PRK00094.1-4"/>
    <property type="match status" value="1"/>
</dbReference>
<dbReference type="PANTHER" id="PTHR11728">
    <property type="entry name" value="GLYCEROL-3-PHOSPHATE DEHYDROGENASE"/>
    <property type="match status" value="1"/>
</dbReference>
<dbReference type="PANTHER" id="PTHR11728:SF1">
    <property type="entry name" value="GLYCEROL-3-PHOSPHATE DEHYDROGENASE [NAD(+)] 2, CHLOROPLASTIC"/>
    <property type="match status" value="1"/>
</dbReference>
<dbReference type="Pfam" id="PF07479">
    <property type="entry name" value="NAD_Gly3P_dh_C"/>
    <property type="match status" value="1"/>
</dbReference>
<dbReference type="Pfam" id="PF01210">
    <property type="entry name" value="NAD_Gly3P_dh_N"/>
    <property type="match status" value="1"/>
</dbReference>
<dbReference type="PIRSF" id="PIRSF000114">
    <property type="entry name" value="Glycerol-3-P_dh"/>
    <property type="match status" value="1"/>
</dbReference>
<dbReference type="PRINTS" id="PR00077">
    <property type="entry name" value="GPDHDRGNASE"/>
</dbReference>
<dbReference type="SUPFAM" id="SSF48179">
    <property type="entry name" value="6-phosphogluconate dehydrogenase C-terminal domain-like"/>
    <property type="match status" value="1"/>
</dbReference>
<dbReference type="SUPFAM" id="SSF51735">
    <property type="entry name" value="NAD(P)-binding Rossmann-fold domains"/>
    <property type="match status" value="1"/>
</dbReference>
<dbReference type="PROSITE" id="PS00957">
    <property type="entry name" value="NAD_G3PDH"/>
    <property type="match status" value="1"/>
</dbReference>
<protein>
    <recommendedName>
        <fullName evidence="1">Glycerol-3-phosphate dehydrogenase [NAD(P)+]</fullName>
        <ecNumber evidence="1">1.1.1.94</ecNumber>
    </recommendedName>
    <alternativeName>
        <fullName evidence="1">NAD(P)(+)-dependent glycerol-3-phosphate dehydrogenase</fullName>
    </alternativeName>
    <alternativeName>
        <fullName evidence="1">NAD(P)H-dependent dihydroxyacetone-phosphate reductase</fullName>
    </alternativeName>
</protein>
<comment type="function">
    <text evidence="1">Catalyzes the reduction of the glycolytic intermediate dihydroxyacetone phosphate (DHAP) to sn-glycerol 3-phosphate (G3P), the key precursor for phospholipid synthesis.</text>
</comment>
<comment type="catalytic activity">
    <reaction evidence="1">
        <text>sn-glycerol 3-phosphate + NAD(+) = dihydroxyacetone phosphate + NADH + H(+)</text>
        <dbReference type="Rhea" id="RHEA:11092"/>
        <dbReference type="ChEBI" id="CHEBI:15378"/>
        <dbReference type="ChEBI" id="CHEBI:57540"/>
        <dbReference type="ChEBI" id="CHEBI:57597"/>
        <dbReference type="ChEBI" id="CHEBI:57642"/>
        <dbReference type="ChEBI" id="CHEBI:57945"/>
        <dbReference type="EC" id="1.1.1.94"/>
    </reaction>
    <physiologicalReaction direction="right-to-left" evidence="1">
        <dbReference type="Rhea" id="RHEA:11094"/>
    </physiologicalReaction>
</comment>
<comment type="catalytic activity">
    <reaction evidence="1">
        <text>sn-glycerol 3-phosphate + NADP(+) = dihydroxyacetone phosphate + NADPH + H(+)</text>
        <dbReference type="Rhea" id="RHEA:11096"/>
        <dbReference type="ChEBI" id="CHEBI:15378"/>
        <dbReference type="ChEBI" id="CHEBI:57597"/>
        <dbReference type="ChEBI" id="CHEBI:57642"/>
        <dbReference type="ChEBI" id="CHEBI:57783"/>
        <dbReference type="ChEBI" id="CHEBI:58349"/>
        <dbReference type="EC" id="1.1.1.94"/>
    </reaction>
    <physiologicalReaction direction="right-to-left" evidence="1">
        <dbReference type="Rhea" id="RHEA:11098"/>
    </physiologicalReaction>
</comment>
<comment type="pathway">
    <text evidence="1">Membrane lipid metabolism; glycerophospholipid metabolism.</text>
</comment>
<comment type="subcellular location">
    <subcellularLocation>
        <location evidence="1">Cytoplasm</location>
    </subcellularLocation>
</comment>
<comment type="similarity">
    <text evidence="1">Belongs to the NAD-dependent glycerol-3-phosphate dehydrogenase family.</text>
</comment>
<keyword id="KW-0963">Cytoplasm</keyword>
<keyword id="KW-0444">Lipid biosynthesis</keyword>
<keyword id="KW-0443">Lipid metabolism</keyword>
<keyword id="KW-0520">NAD</keyword>
<keyword id="KW-0521">NADP</keyword>
<keyword id="KW-0547">Nucleotide-binding</keyword>
<keyword id="KW-0560">Oxidoreductase</keyword>
<keyword id="KW-0594">Phospholipid biosynthesis</keyword>
<keyword id="KW-1208">Phospholipid metabolism</keyword>
<keyword id="KW-1185">Reference proteome</keyword>
<evidence type="ECO:0000255" key="1">
    <source>
        <dbReference type="HAMAP-Rule" id="MF_00394"/>
    </source>
</evidence>
<feature type="chain" id="PRO_0000255340" description="Glycerol-3-phosphate dehydrogenase [NAD(P)+]">
    <location>
        <begin position="1"/>
        <end position="331"/>
    </location>
</feature>
<feature type="active site" description="Proton acceptor" evidence="1">
    <location>
        <position position="187"/>
    </location>
</feature>
<feature type="binding site" evidence="1">
    <location>
        <position position="13"/>
    </location>
    <ligand>
        <name>NADPH</name>
        <dbReference type="ChEBI" id="CHEBI:57783"/>
    </ligand>
</feature>
<feature type="binding site" evidence="1">
    <location>
        <position position="33"/>
    </location>
    <ligand>
        <name>NADPH</name>
        <dbReference type="ChEBI" id="CHEBI:57783"/>
    </ligand>
</feature>
<feature type="binding site" evidence="1">
    <location>
        <position position="103"/>
    </location>
    <ligand>
        <name>NADPH</name>
        <dbReference type="ChEBI" id="CHEBI:57783"/>
    </ligand>
</feature>
<feature type="binding site" evidence="1">
    <location>
        <position position="103"/>
    </location>
    <ligand>
        <name>sn-glycerol 3-phosphate</name>
        <dbReference type="ChEBI" id="CHEBI:57597"/>
    </ligand>
</feature>
<feature type="binding site" evidence="1">
    <location>
        <position position="131"/>
    </location>
    <ligand>
        <name>sn-glycerol 3-phosphate</name>
        <dbReference type="ChEBI" id="CHEBI:57597"/>
    </ligand>
</feature>
<feature type="binding site" evidence="1">
    <location>
        <position position="133"/>
    </location>
    <ligand>
        <name>sn-glycerol 3-phosphate</name>
        <dbReference type="ChEBI" id="CHEBI:57597"/>
    </ligand>
</feature>
<feature type="binding site" evidence="1">
    <location>
        <position position="135"/>
    </location>
    <ligand>
        <name>NADPH</name>
        <dbReference type="ChEBI" id="CHEBI:57783"/>
    </ligand>
</feature>
<feature type="binding site" evidence="1">
    <location>
        <position position="187"/>
    </location>
    <ligand>
        <name>sn-glycerol 3-phosphate</name>
        <dbReference type="ChEBI" id="CHEBI:57597"/>
    </ligand>
</feature>
<feature type="binding site" evidence="1">
    <location>
        <position position="240"/>
    </location>
    <ligand>
        <name>sn-glycerol 3-phosphate</name>
        <dbReference type="ChEBI" id="CHEBI:57597"/>
    </ligand>
</feature>
<feature type="binding site" evidence="1">
    <location>
        <position position="250"/>
    </location>
    <ligand>
        <name>sn-glycerol 3-phosphate</name>
        <dbReference type="ChEBI" id="CHEBI:57597"/>
    </ligand>
</feature>
<feature type="binding site" evidence="1">
    <location>
        <position position="251"/>
    </location>
    <ligand>
        <name>NADPH</name>
        <dbReference type="ChEBI" id="CHEBI:57783"/>
    </ligand>
</feature>
<feature type="binding site" evidence="1">
    <location>
        <position position="251"/>
    </location>
    <ligand>
        <name>sn-glycerol 3-phosphate</name>
        <dbReference type="ChEBI" id="CHEBI:57597"/>
    </ligand>
</feature>
<feature type="binding site" evidence="1">
    <location>
        <position position="252"/>
    </location>
    <ligand>
        <name>sn-glycerol 3-phosphate</name>
        <dbReference type="ChEBI" id="CHEBI:57597"/>
    </ligand>
</feature>
<feature type="binding site" evidence="1">
    <location>
        <position position="275"/>
    </location>
    <ligand>
        <name>NADPH</name>
        <dbReference type="ChEBI" id="CHEBI:57783"/>
    </ligand>
</feature>
<feature type="binding site" evidence="1">
    <location>
        <position position="277"/>
    </location>
    <ligand>
        <name>NADPH</name>
        <dbReference type="ChEBI" id="CHEBI:57783"/>
    </ligand>
</feature>
<name>GPDA_NOVAD</name>
<proteinExistence type="inferred from homology"/>
<organism>
    <name type="scientific">Novosphingobium aromaticivorans (strain ATCC 700278 / DSM 12444 / CCUG 56034 / CIP 105152 / NBRC 16084 / F199)</name>
    <dbReference type="NCBI Taxonomy" id="279238"/>
    <lineage>
        <taxon>Bacteria</taxon>
        <taxon>Pseudomonadati</taxon>
        <taxon>Pseudomonadota</taxon>
        <taxon>Alphaproteobacteria</taxon>
        <taxon>Sphingomonadales</taxon>
        <taxon>Sphingomonadaceae</taxon>
        <taxon>Novosphingobium</taxon>
    </lineage>
</organism>
<accession>Q2G4K3</accession>
<sequence>MTFEVGVVGAGAWGTALAQMLSSDGREVLLWARESEVVREINEDRRNGPFLPSACLNPTITATADLADMARIPVLLLVTPAQHLASVLGGIGRDGGDVVLCSKGIEAGTGRLMADVARDAAPDASIAVLSGPTFAHEVADGLPTAVTLACAGGEEQWLRLSTAIARPTFRPYYSDDVTGAEIGGAVKNVLAIACGVVEGLRLGQNARAALISRGFAEMQRFGLALGARPKTLSGLSGLGDLVLTCSSTSSRNFSLGKALGEGASATAVMADRATVAEGAFTAPVLADLARGRGISMPIVEAVVTLLEGAAPAREVVAGLLSRPLTAENPLV</sequence>
<reference key="1">
    <citation type="submission" date="2006-01" db="EMBL/GenBank/DDBJ databases">
        <title>Complete sequence of Novosphingobium aromaticivorans DSM 12444.</title>
        <authorList>
            <consortium name="US DOE Joint Genome Institute"/>
            <person name="Copeland A."/>
            <person name="Lucas S."/>
            <person name="Lapidus A."/>
            <person name="Barry K."/>
            <person name="Detter J.C."/>
            <person name="Glavina T."/>
            <person name="Hammon N."/>
            <person name="Israni S."/>
            <person name="Pitluck S."/>
            <person name="Chain P."/>
            <person name="Malfatti S."/>
            <person name="Shin M."/>
            <person name="Vergez L."/>
            <person name="Schmutz J."/>
            <person name="Larimer F."/>
            <person name="Land M."/>
            <person name="Kyrpides N."/>
            <person name="Ivanova N."/>
            <person name="Fredrickson J."/>
            <person name="Balkwill D."/>
            <person name="Romine M.F."/>
            <person name="Richardson P."/>
        </authorList>
    </citation>
    <scope>NUCLEOTIDE SEQUENCE [LARGE SCALE GENOMIC DNA]</scope>
    <source>
        <strain>ATCC 700278 / DSM 12444 / CCUG 56034 / CIP 105152 / NBRC 16084 / F199</strain>
    </source>
</reference>